<dbReference type="EMBL" id="AL123456">
    <property type="protein sequence ID" value="CCP43451.1"/>
    <property type="molecule type" value="Genomic_DNA"/>
</dbReference>
<dbReference type="PIR" id="F70642">
    <property type="entry name" value="F70642"/>
</dbReference>
<dbReference type="RefSeq" id="NP_215221.1">
    <property type="nucleotide sequence ID" value="NC_000962.3"/>
</dbReference>
<dbReference type="RefSeq" id="WP_003403590.1">
    <property type="nucleotide sequence ID" value="NZ_NVQJ01000007.1"/>
</dbReference>
<dbReference type="PDB" id="5V93">
    <property type="method" value="EM"/>
    <property type="resolution" value="4.00 A"/>
    <property type="chains" value="c=1-274"/>
</dbReference>
<dbReference type="PDB" id="7KGB">
    <property type="method" value="EM"/>
    <property type="resolution" value="2.70 A"/>
    <property type="chains" value="c=1-274"/>
</dbReference>
<dbReference type="PDB" id="7MSC">
    <property type="method" value="EM"/>
    <property type="resolution" value="2.97 A"/>
    <property type="chains" value="c=1-274"/>
</dbReference>
<dbReference type="PDB" id="7MSH">
    <property type="method" value="EM"/>
    <property type="resolution" value="3.23 A"/>
    <property type="chains" value="c=1-274"/>
</dbReference>
<dbReference type="PDB" id="7MSM">
    <property type="method" value="EM"/>
    <property type="resolution" value="2.79 A"/>
    <property type="chains" value="c=1-274"/>
</dbReference>
<dbReference type="PDB" id="7MSZ">
    <property type="method" value="EM"/>
    <property type="resolution" value="3.10 A"/>
    <property type="chains" value="c=1-274"/>
</dbReference>
<dbReference type="PDB" id="7MT2">
    <property type="method" value="EM"/>
    <property type="resolution" value="2.76 A"/>
    <property type="chains" value="c=1-274"/>
</dbReference>
<dbReference type="PDB" id="7MT3">
    <property type="method" value="EM"/>
    <property type="resolution" value="2.80 A"/>
    <property type="chains" value="c=1-274"/>
</dbReference>
<dbReference type="PDB" id="7MT7">
    <property type="method" value="EM"/>
    <property type="resolution" value="2.71 A"/>
    <property type="chains" value="c=1-274"/>
</dbReference>
<dbReference type="PDB" id="7SFR">
    <property type="method" value="EM"/>
    <property type="resolution" value="2.60 A"/>
    <property type="chains" value="c=1-274"/>
</dbReference>
<dbReference type="PDBsum" id="5V93"/>
<dbReference type="PDBsum" id="7KGB"/>
<dbReference type="PDBsum" id="7MSC"/>
<dbReference type="PDBsum" id="7MSH"/>
<dbReference type="PDBsum" id="7MSM"/>
<dbReference type="PDBsum" id="7MSZ"/>
<dbReference type="PDBsum" id="7MT2"/>
<dbReference type="PDBsum" id="7MT3"/>
<dbReference type="PDBsum" id="7MT7"/>
<dbReference type="PDBsum" id="7SFR"/>
<dbReference type="EMDB" id="EMD-22865"/>
<dbReference type="EMDB" id="EMD-23961"/>
<dbReference type="EMDB" id="EMD-23962"/>
<dbReference type="EMDB" id="EMD-23969"/>
<dbReference type="EMDB" id="EMD-23972"/>
<dbReference type="EMDB" id="EMD-23974"/>
<dbReference type="EMDB" id="EMD-23975"/>
<dbReference type="EMDB" id="EMD-23976"/>
<dbReference type="EMDB" id="EMD-8645"/>
<dbReference type="SMR" id="P9WH37"/>
<dbReference type="FunCoup" id="P9WH37">
    <property type="interactions" value="214"/>
</dbReference>
<dbReference type="STRING" id="83332.Rv0707"/>
<dbReference type="PaxDb" id="83332-Rv0707"/>
<dbReference type="DNASU" id="888357"/>
<dbReference type="GeneID" id="45424672"/>
<dbReference type="GeneID" id="888357"/>
<dbReference type="KEGG" id="mtu:Rv0707"/>
<dbReference type="KEGG" id="mtv:RVBD_0707"/>
<dbReference type="TubercuList" id="Rv0707"/>
<dbReference type="eggNOG" id="COG0092">
    <property type="taxonomic scope" value="Bacteria"/>
</dbReference>
<dbReference type="InParanoid" id="P9WH37"/>
<dbReference type="OrthoDB" id="9806396at2"/>
<dbReference type="PhylomeDB" id="P9WH37"/>
<dbReference type="PRO" id="PR:P9WH37"/>
<dbReference type="Proteomes" id="UP000001584">
    <property type="component" value="Chromosome"/>
</dbReference>
<dbReference type="GO" id="GO:0022627">
    <property type="term" value="C:cytosolic small ribosomal subunit"/>
    <property type="evidence" value="ECO:0000318"/>
    <property type="project" value="GO_Central"/>
</dbReference>
<dbReference type="GO" id="GO:0009274">
    <property type="term" value="C:peptidoglycan-based cell wall"/>
    <property type="evidence" value="ECO:0007005"/>
    <property type="project" value="MTBBASE"/>
</dbReference>
<dbReference type="GO" id="GO:0005886">
    <property type="term" value="C:plasma membrane"/>
    <property type="evidence" value="ECO:0007005"/>
    <property type="project" value="MTBBASE"/>
</dbReference>
<dbReference type="GO" id="GO:0003729">
    <property type="term" value="F:mRNA binding"/>
    <property type="evidence" value="ECO:0007669"/>
    <property type="project" value="UniProtKB-UniRule"/>
</dbReference>
<dbReference type="GO" id="GO:0019843">
    <property type="term" value="F:rRNA binding"/>
    <property type="evidence" value="ECO:0007669"/>
    <property type="project" value="UniProtKB-UniRule"/>
</dbReference>
<dbReference type="GO" id="GO:0003735">
    <property type="term" value="F:structural constituent of ribosome"/>
    <property type="evidence" value="ECO:0000318"/>
    <property type="project" value="GO_Central"/>
</dbReference>
<dbReference type="GO" id="GO:0006412">
    <property type="term" value="P:translation"/>
    <property type="evidence" value="ECO:0007669"/>
    <property type="project" value="UniProtKB-UniRule"/>
</dbReference>
<dbReference type="CDD" id="cd02412">
    <property type="entry name" value="KH-II_30S_S3"/>
    <property type="match status" value="1"/>
</dbReference>
<dbReference type="FunFam" id="3.30.1140.32:FF:000002">
    <property type="entry name" value="30S ribosomal protein S3"/>
    <property type="match status" value="1"/>
</dbReference>
<dbReference type="FunFam" id="3.30.300.20:FF:000001">
    <property type="entry name" value="30S ribosomal protein S3"/>
    <property type="match status" value="1"/>
</dbReference>
<dbReference type="Gene3D" id="3.30.300.20">
    <property type="match status" value="1"/>
</dbReference>
<dbReference type="Gene3D" id="3.30.1140.32">
    <property type="entry name" value="Ribosomal protein S3, C-terminal domain"/>
    <property type="match status" value="1"/>
</dbReference>
<dbReference type="HAMAP" id="MF_01309_B">
    <property type="entry name" value="Ribosomal_uS3_B"/>
    <property type="match status" value="1"/>
</dbReference>
<dbReference type="InterPro" id="IPR004087">
    <property type="entry name" value="KH_dom"/>
</dbReference>
<dbReference type="InterPro" id="IPR015946">
    <property type="entry name" value="KH_dom-like_a/b"/>
</dbReference>
<dbReference type="InterPro" id="IPR004044">
    <property type="entry name" value="KH_dom_type_2"/>
</dbReference>
<dbReference type="InterPro" id="IPR009019">
    <property type="entry name" value="KH_sf_prok-type"/>
</dbReference>
<dbReference type="InterPro" id="IPR036419">
    <property type="entry name" value="Ribosomal_S3_C_sf"/>
</dbReference>
<dbReference type="InterPro" id="IPR005704">
    <property type="entry name" value="Ribosomal_uS3_bac-typ"/>
</dbReference>
<dbReference type="InterPro" id="IPR001351">
    <property type="entry name" value="Ribosomal_uS3_C"/>
</dbReference>
<dbReference type="InterPro" id="IPR018280">
    <property type="entry name" value="Ribosomal_uS3_CS"/>
</dbReference>
<dbReference type="NCBIfam" id="TIGR01009">
    <property type="entry name" value="rpsC_bact"/>
    <property type="match status" value="1"/>
</dbReference>
<dbReference type="PANTHER" id="PTHR11760">
    <property type="entry name" value="30S/40S RIBOSOMAL PROTEIN S3"/>
    <property type="match status" value="1"/>
</dbReference>
<dbReference type="PANTHER" id="PTHR11760:SF19">
    <property type="entry name" value="SMALL RIBOSOMAL SUBUNIT PROTEIN US3C"/>
    <property type="match status" value="1"/>
</dbReference>
<dbReference type="Pfam" id="PF07650">
    <property type="entry name" value="KH_2"/>
    <property type="match status" value="1"/>
</dbReference>
<dbReference type="Pfam" id="PF00189">
    <property type="entry name" value="Ribosomal_S3_C"/>
    <property type="match status" value="1"/>
</dbReference>
<dbReference type="SMART" id="SM00322">
    <property type="entry name" value="KH"/>
    <property type="match status" value="1"/>
</dbReference>
<dbReference type="SUPFAM" id="SSF54814">
    <property type="entry name" value="Prokaryotic type KH domain (KH-domain type II)"/>
    <property type="match status" value="1"/>
</dbReference>
<dbReference type="SUPFAM" id="SSF54821">
    <property type="entry name" value="Ribosomal protein S3 C-terminal domain"/>
    <property type="match status" value="1"/>
</dbReference>
<dbReference type="PROSITE" id="PS50823">
    <property type="entry name" value="KH_TYPE_2"/>
    <property type="match status" value="1"/>
</dbReference>
<dbReference type="PROSITE" id="PS00548">
    <property type="entry name" value="RIBOSOMAL_S3"/>
    <property type="match status" value="1"/>
</dbReference>
<proteinExistence type="evidence at protein level"/>
<evidence type="ECO:0000255" key="1">
    <source>
        <dbReference type="HAMAP-Rule" id="MF_01309"/>
    </source>
</evidence>
<evidence type="ECO:0000256" key="2">
    <source>
        <dbReference type="SAM" id="MobiDB-lite"/>
    </source>
</evidence>
<evidence type="ECO:0000305" key="3"/>
<gene>
    <name evidence="1" type="primary">rpsC</name>
    <name type="ordered locus">Rv0707</name>
    <name type="ORF">MTCY210.26</name>
</gene>
<reference key="1">
    <citation type="journal article" date="1998" name="Nature">
        <title>Deciphering the biology of Mycobacterium tuberculosis from the complete genome sequence.</title>
        <authorList>
            <person name="Cole S.T."/>
            <person name="Brosch R."/>
            <person name="Parkhill J."/>
            <person name="Garnier T."/>
            <person name="Churcher C.M."/>
            <person name="Harris D.E."/>
            <person name="Gordon S.V."/>
            <person name="Eiglmeier K."/>
            <person name="Gas S."/>
            <person name="Barry C.E. III"/>
            <person name="Tekaia F."/>
            <person name="Badcock K."/>
            <person name="Basham D."/>
            <person name="Brown D."/>
            <person name="Chillingworth T."/>
            <person name="Connor R."/>
            <person name="Davies R.M."/>
            <person name="Devlin K."/>
            <person name="Feltwell T."/>
            <person name="Gentles S."/>
            <person name="Hamlin N."/>
            <person name="Holroyd S."/>
            <person name="Hornsby T."/>
            <person name="Jagels K."/>
            <person name="Krogh A."/>
            <person name="McLean J."/>
            <person name="Moule S."/>
            <person name="Murphy L.D."/>
            <person name="Oliver S."/>
            <person name="Osborne J."/>
            <person name="Quail M.A."/>
            <person name="Rajandream M.A."/>
            <person name="Rogers J."/>
            <person name="Rutter S."/>
            <person name="Seeger K."/>
            <person name="Skelton S."/>
            <person name="Squares S."/>
            <person name="Squares R."/>
            <person name="Sulston J.E."/>
            <person name="Taylor K."/>
            <person name="Whitehead S."/>
            <person name="Barrell B.G."/>
        </authorList>
    </citation>
    <scope>NUCLEOTIDE SEQUENCE [LARGE SCALE GENOMIC DNA]</scope>
    <source>
        <strain>ATCC 25618 / H37Rv</strain>
    </source>
</reference>
<reference key="2">
    <citation type="journal article" date="2011" name="Mol. Cell. Proteomics">
        <title>Proteogenomic analysis of Mycobacterium tuberculosis by high resolution mass spectrometry.</title>
        <authorList>
            <person name="Kelkar D.S."/>
            <person name="Kumar D."/>
            <person name="Kumar P."/>
            <person name="Balakrishnan L."/>
            <person name="Muthusamy B."/>
            <person name="Yadav A.K."/>
            <person name="Shrivastava P."/>
            <person name="Marimuthu A."/>
            <person name="Anand S."/>
            <person name="Sundaram H."/>
            <person name="Kingsbury R."/>
            <person name="Harsha H.C."/>
            <person name="Nair B."/>
            <person name="Prasad T.S."/>
            <person name="Chauhan D.S."/>
            <person name="Katoch K."/>
            <person name="Katoch V.M."/>
            <person name="Kumar P."/>
            <person name="Chaerkady R."/>
            <person name="Ramachandran S."/>
            <person name="Dash D."/>
            <person name="Pandey A."/>
        </authorList>
    </citation>
    <scope>IDENTIFICATION BY MASS SPECTROMETRY [LARGE SCALE ANALYSIS]</scope>
    <source>
        <strain>ATCC 25618 / H37Rv</strain>
    </source>
</reference>
<accession>P9WH37</accession>
<accession>L0T4M3</accession>
<accession>O06048</accession>
<accession>P0A5X6</accession>
<accession>P95055</accession>
<feature type="chain" id="PRO_0000130158" description="Small ribosomal subunit protein uS3">
    <location>
        <begin position="1"/>
        <end position="274"/>
    </location>
</feature>
<feature type="domain" description="KH type-2" evidence="1">
    <location>
        <begin position="38"/>
        <end position="106"/>
    </location>
</feature>
<feature type="region of interest" description="Disordered" evidence="2">
    <location>
        <begin position="215"/>
        <end position="274"/>
    </location>
</feature>
<feature type="compositionally biased region" description="Low complexity" evidence="2">
    <location>
        <begin position="238"/>
        <end position="266"/>
    </location>
</feature>
<protein>
    <recommendedName>
        <fullName evidence="1">Small ribosomal subunit protein uS3</fullName>
    </recommendedName>
    <alternativeName>
        <fullName evidence="3">30S ribosomal protein S3</fullName>
    </alternativeName>
</protein>
<keyword id="KW-0002">3D-structure</keyword>
<keyword id="KW-1185">Reference proteome</keyword>
<keyword id="KW-0687">Ribonucleoprotein</keyword>
<keyword id="KW-0689">Ribosomal protein</keyword>
<keyword id="KW-0694">RNA-binding</keyword>
<keyword id="KW-0699">rRNA-binding</keyword>
<organism>
    <name type="scientific">Mycobacterium tuberculosis (strain ATCC 25618 / H37Rv)</name>
    <dbReference type="NCBI Taxonomy" id="83332"/>
    <lineage>
        <taxon>Bacteria</taxon>
        <taxon>Bacillati</taxon>
        <taxon>Actinomycetota</taxon>
        <taxon>Actinomycetes</taxon>
        <taxon>Mycobacteriales</taxon>
        <taxon>Mycobacteriaceae</taxon>
        <taxon>Mycobacterium</taxon>
        <taxon>Mycobacterium tuberculosis complex</taxon>
    </lineage>
</organism>
<sequence>MGQKINPHGFRLGITTDWKSRWYADKQYAEYVKEDVAIRRLLSSGLERAGIADVEIERTRDRVRVDIHTARPGIVIGRRGTEADRIRADLEKLTGKQVQLNILEVKNPESQAQLVAQGVAEQLSNRVAFRRAMRKAIQSAMRQPNVKGIRVQCSGRLGGAEMSRSEFYREGRVPLHTLRADIDYGLYEAKTTFGRIGVKVWIYKGDIVGGKRELAAAAPAGADRPRRERPSGTRPRRSGASGTTATGTDAGRAAGGEEAAPDAAAPVEAQSTES</sequence>
<name>RS3_MYCTU</name>
<comment type="function">
    <text evidence="1">Binds the lower part of the 30S subunit head. Binds mRNA in the 70S ribosome, positioning it for translation.</text>
</comment>
<comment type="subunit">
    <text evidence="1">Part of the 30S ribosomal subunit. Forms a tight complex with proteins S10 and S14.</text>
</comment>
<comment type="similarity">
    <text evidence="1">Belongs to the universal ribosomal protein uS3 family.</text>
</comment>